<name>IAAA_ECOLI</name>
<reference key="1">
    <citation type="journal article" date="1996" name="DNA Res.">
        <title>A 718-kb DNA sequence of the Escherichia coli K-12 genome corresponding to the 12.7-28.0 min region on the linkage map.</title>
        <authorList>
            <person name="Oshima T."/>
            <person name="Aiba H."/>
            <person name="Baba T."/>
            <person name="Fujita K."/>
            <person name="Hayashi K."/>
            <person name="Honjo A."/>
            <person name="Ikemoto K."/>
            <person name="Inada T."/>
            <person name="Itoh T."/>
            <person name="Kajihara M."/>
            <person name="Kanai K."/>
            <person name="Kashimoto K."/>
            <person name="Kimura S."/>
            <person name="Kitagawa M."/>
            <person name="Makino K."/>
            <person name="Masuda S."/>
            <person name="Miki T."/>
            <person name="Mizobuchi K."/>
            <person name="Mori H."/>
            <person name="Motomura K."/>
            <person name="Nakamura Y."/>
            <person name="Nashimoto H."/>
            <person name="Nishio Y."/>
            <person name="Saito N."/>
            <person name="Sampei G."/>
            <person name="Seki Y."/>
            <person name="Tagami H."/>
            <person name="Takemoto K."/>
            <person name="Wada C."/>
            <person name="Yamamoto Y."/>
            <person name="Yano M."/>
            <person name="Horiuchi T."/>
        </authorList>
    </citation>
    <scope>NUCLEOTIDE SEQUENCE [LARGE SCALE GENOMIC DNA]</scope>
    <source>
        <strain>K12 / W3110 / ATCC 27325 / DSM 5911</strain>
    </source>
</reference>
<reference key="2">
    <citation type="journal article" date="1997" name="Science">
        <title>The complete genome sequence of Escherichia coli K-12.</title>
        <authorList>
            <person name="Blattner F.R."/>
            <person name="Plunkett G. III"/>
            <person name="Bloch C.A."/>
            <person name="Perna N.T."/>
            <person name="Burland V."/>
            <person name="Riley M."/>
            <person name="Collado-Vides J."/>
            <person name="Glasner J.D."/>
            <person name="Rode C.K."/>
            <person name="Mayhew G.F."/>
            <person name="Gregor J."/>
            <person name="Davis N.W."/>
            <person name="Kirkpatrick H.A."/>
            <person name="Goeden M.A."/>
            <person name="Rose D.J."/>
            <person name="Mau B."/>
            <person name="Shao Y."/>
        </authorList>
    </citation>
    <scope>NUCLEOTIDE SEQUENCE [LARGE SCALE GENOMIC DNA]</scope>
    <source>
        <strain>K12 / MG1655 / ATCC 47076</strain>
    </source>
</reference>
<reference key="3">
    <citation type="journal article" date="2006" name="Mol. Syst. Biol.">
        <title>Highly accurate genome sequences of Escherichia coli K-12 strains MG1655 and W3110.</title>
        <authorList>
            <person name="Hayashi K."/>
            <person name="Morooka N."/>
            <person name="Yamamoto Y."/>
            <person name="Fujita K."/>
            <person name="Isono K."/>
            <person name="Choi S."/>
            <person name="Ohtsubo E."/>
            <person name="Baba T."/>
            <person name="Wanner B.L."/>
            <person name="Mori H."/>
            <person name="Horiuchi T."/>
        </authorList>
    </citation>
    <scope>NUCLEOTIDE SEQUENCE [LARGE SCALE GENOMIC DNA]</scope>
    <source>
        <strain>K12 / W3110 / ATCC 27325 / DSM 5911</strain>
    </source>
</reference>
<reference key="4">
    <citation type="journal article" date="1988" name="J. Bacteriol.">
        <title>Cloning and sequencing of the Escherichia coli chlEN operon involved in molybdopterin biosynthesis.</title>
        <authorList>
            <person name="Nohno T."/>
            <person name="Kasai Y."/>
            <person name="Saito T."/>
        </authorList>
    </citation>
    <scope>NUCLEOTIDE SEQUENCE [GENOMIC DNA] OF 1-52</scope>
</reference>
<reference key="5">
    <citation type="journal article" date="2002" name="Biochem. J.">
        <title>Isoaspartyl dipeptidase activity of plant-type asparaginases.</title>
        <authorList>
            <person name="Hejazi M."/>
            <person name="Piotukh K."/>
            <person name="Mattow J."/>
            <person name="Deutzmann R."/>
            <person name="Volkmer-Engert R."/>
            <person name="Lockau W."/>
        </authorList>
    </citation>
    <scope>PROTEIN SEQUENCE OF 179-183</scope>
    <scope>FUNCTION</scope>
    <scope>SUBUNIT</scope>
    <scope>AUTOCATALYTIC CLEAVAGE</scope>
</reference>
<reference key="6">
    <citation type="journal article" date="1994" name="Nucleic Acids Res.">
        <title>Intrinsic and extrinsic approaches for detecting genes in a bacterial genome.</title>
        <authorList>
            <person name="Borodovsky M."/>
            <person name="Rudd K.E."/>
            <person name="Koonin E.V."/>
        </authorList>
    </citation>
    <scope>IDENTIFICATION</scope>
</reference>
<reference key="7">
    <citation type="journal article" date="2000" name="Acta Crystallogr. D">
        <title>Crystallization and preliminary crystallographic studies of a new L-asparaginase encoded by the Escherichia coli genome.</title>
        <authorList>
            <person name="Borek D."/>
            <person name="Jaskolski M."/>
        </authorList>
    </citation>
    <scope>PROBABLE AUTOCATALYTIC CLEAVAGE</scope>
    <scope>SUBUNIT</scope>
    <scope>PRELIMINARY CRYSTALLIZATION</scope>
    <source>
        <strain>K12 / JM108</strain>
    </source>
</reference>
<reference key="8">
    <citation type="journal article" date="2002" name="FEMS Microbiol. Lett.">
        <title>Identification of a CysB-regulated gene involved in glutathione transport in Escherichia coli.</title>
        <authorList>
            <person name="Parry J."/>
            <person name="Clark D.P."/>
        </authorList>
    </citation>
    <scope>POSSIBLE FUNCTION IN GLUTATHIONE TRANSPORT</scope>
    <scope>CONTROL OF EXPRESSION BY CYSB</scope>
    <source>
        <strain>K12</strain>
    </source>
</reference>
<reference key="9">
    <citation type="journal article" date="2004" name="Eur. J. Biochem.">
        <title>Expression, purification and catalytic activity of Lupinus luteus asparagine beta-amidohydrolase and its Escherichia coli homolog.</title>
        <authorList>
            <person name="Borek D."/>
            <person name="Michalska K."/>
            <person name="Brzezinski K."/>
            <person name="Kisiel A."/>
            <person name="Podkowinski J."/>
            <person name="Bonthron D.T."/>
            <person name="Krowarsch D."/>
            <person name="Otlewski J."/>
            <person name="Jaskolski M."/>
        </authorList>
    </citation>
    <scope>MASS SPECTROMETRY</scope>
    <scope>KINETIC PARAMETERS</scope>
    <source>
        <strain>K12 / DH5-alpha</strain>
    </source>
</reference>
<reference key="10">
    <citation type="thesis" date="2001" institute="A. Mickiewicz University" country="Poland">
        <title>Structural and biochemical studies of asparaginases.</title>
        <authorList>
            <person name="Borek D."/>
        </authorList>
    </citation>
    <scope>X-RAY CRYSTALLOGRAPHY (1.9 ANGSTROMS) OF 2-321</scope>
</reference>
<reference key="11">
    <citation type="journal article" date="2004" name="Acta Crystallogr. D">
        <title>Structure of the isoaspartyl peptidase with L-asparaginase activity from Escherichia coli.</title>
        <authorList>
            <person name="Prahl A."/>
            <person name="Pazgier M."/>
            <person name="Hejazi M."/>
            <person name="Lockau W."/>
            <person name="Lubkowski J."/>
        </authorList>
    </citation>
    <scope>X-RAY CRYSTALLOGRAPHY (1.65 ANGSTROMS) OF 2-321</scope>
    <scope>SUBUNIT</scope>
</reference>
<reference key="12">
    <citation type="journal article" date="2005" name="J. Biol. Chem.">
        <title>Crystal structure of isoaspartyl aminopeptidase in complex with L-aspartate.</title>
        <authorList>
            <person name="Michalska K."/>
            <person name="Brzezinski K."/>
            <person name="Jaskolski M."/>
        </authorList>
    </citation>
    <scope>X-RAY CRYSTALLOGRAPHY (1.9 ANGSTROMS) OF 2-315 IN COMPLEX WITH L-ASPARTATE</scope>
    <source>
        <strain>K12 / DH5-alpha</strain>
    </source>
</reference>
<reference key="13">
    <citation type="journal article" date="2008" name="Acta Crystallogr. D">
        <title>Crystal packing of plant-type L-asparaginase from Escherichia coli.</title>
        <authorList>
            <person name="Michalska K."/>
            <person name="Borek D."/>
            <person name="Hernandez-Santoyo A."/>
            <person name="Jaskolski M."/>
        </authorList>
    </citation>
    <scope>X-RAY CRYSTALLOGRAPHY (1.65 ANGSTROMS) OF 2-321 OF MUTANT THR-179</scope>
    <scope>ACTIVE SITE</scope>
</reference>
<feature type="initiator methionine" description="Removed">
    <location>
        <position position="1"/>
    </location>
</feature>
<feature type="chain" id="PRO_0000002349" description="Isoaspartyl peptidase subunit alpha">
    <location>
        <begin position="2"/>
        <end position="178"/>
    </location>
</feature>
<feature type="chain" id="PRO_0000329014" description="Isoaspartyl peptidase subunit beta">
    <location>
        <begin position="179"/>
        <end position="321"/>
    </location>
</feature>
<feature type="active site" description="Nucleophile" evidence="7">
    <location>
        <position position="179"/>
    </location>
</feature>
<feature type="binding site" evidence="5 8">
    <location>
        <begin position="207"/>
        <end position="210"/>
    </location>
    <ligand>
        <name>substrate</name>
    </ligand>
</feature>
<feature type="binding site" evidence="5 8">
    <location>
        <begin position="230"/>
        <end position="233"/>
    </location>
    <ligand>
        <name>substrate</name>
    </ligand>
</feature>
<feature type="site" description="Cleavage; by autolysis" evidence="2">
    <location>
        <begin position="178"/>
        <end position="179"/>
    </location>
</feature>
<feature type="mutagenesis site" description="Catalytically inactive." evidence="7">
    <original>T</original>
    <variation>A</variation>
    <location>
        <position position="179"/>
    </location>
</feature>
<feature type="strand" evidence="9">
    <location>
        <begin position="5"/>
        <end position="13"/>
    </location>
</feature>
<feature type="helix" evidence="9">
    <location>
        <begin position="17"/>
        <end position="19"/>
    </location>
</feature>
<feature type="helix" evidence="9">
    <location>
        <begin position="22"/>
        <end position="44"/>
    </location>
</feature>
<feature type="helix" evidence="9">
    <location>
        <begin position="49"/>
        <end position="62"/>
    </location>
</feature>
<feature type="strand" evidence="9">
    <location>
        <begin position="66"/>
        <end position="69"/>
    </location>
</feature>
<feature type="strand" evidence="9">
    <location>
        <begin position="82"/>
        <end position="88"/>
    </location>
</feature>
<feature type="turn" evidence="9">
    <location>
        <begin position="89"/>
        <end position="91"/>
    </location>
</feature>
<feature type="strand" evidence="9">
    <location>
        <begin position="94"/>
        <end position="102"/>
    </location>
</feature>
<feature type="helix" evidence="9">
    <location>
        <begin position="106"/>
        <end position="116"/>
    </location>
</feature>
<feature type="strand" evidence="9">
    <location>
        <begin position="120"/>
        <end position="123"/>
    </location>
</feature>
<feature type="helix" evidence="9">
    <location>
        <begin position="124"/>
        <end position="132"/>
    </location>
</feature>
<feature type="turn" evidence="9">
    <location>
        <begin position="133"/>
        <end position="135"/>
    </location>
</feature>
<feature type="helix" evidence="9">
    <location>
        <begin position="141"/>
        <end position="144"/>
    </location>
</feature>
<feature type="helix" evidence="9">
    <location>
        <begin position="147"/>
        <end position="156"/>
    </location>
</feature>
<feature type="strand" evidence="10">
    <location>
        <begin position="170"/>
        <end position="172"/>
    </location>
</feature>
<feature type="turn" evidence="10">
    <location>
        <begin position="174"/>
        <end position="176"/>
    </location>
</feature>
<feature type="strand" evidence="9">
    <location>
        <begin position="180"/>
        <end position="185"/>
    </location>
</feature>
<feature type="strand" evidence="9">
    <location>
        <begin position="191"/>
        <end position="197"/>
    </location>
</feature>
<feature type="turn" evidence="9">
    <location>
        <begin position="214"/>
        <end position="216"/>
    </location>
</feature>
<feature type="strand" evidence="9">
    <location>
        <begin position="217"/>
        <end position="220"/>
    </location>
</feature>
<feature type="strand" evidence="9">
    <location>
        <begin position="224"/>
        <end position="231"/>
    </location>
</feature>
<feature type="helix" evidence="9">
    <location>
        <begin position="233"/>
        <end position="238"/>
    </location>
</feature>
<feature type="helix" evidence="9">
    <location>
        <begin position="241"/>
        <end position="250"/>
    </location>
</feature>
<feature type="helix" evidence="9">
    <location>
        <begin position="256"/>
        <end position="265"/>
    </location>
</feature>
<feature type="helix" evidence="9">
    <location>
        <begin position="267"/>
        <end position="270"/>
    </location>
</feature>
<feature type="strand" evidence="9">
    <location>
        <begin position="275"/>
        <end position="281"/>
    </location>
</feature>
<feature type="strand" evidence="9">
    <location>
        <begin position="290"/>
        <end position="301"/>
    </location>
</feature>
<feature type="strand" evidence="9">
    <location>
        <begin position="307"/>
        <end position="311"/>
    </location>
</feature>
<sequence>MGKAVIAIHGGAGAISRAQMSLQQELRYIEALSAIVETGQKMLEAGESALDVVTEAVRLLEECPLFNAGIGAVFTRDETHELDACVMDGNTLKAGAVAGVSHLRNPVLAARLVMEQSPHVMMIGEGAENFAFARGMERVSPEIFSTSLRYEQLLAARKEGATVLDHSGAPLDEKQKMGTVGAVALDLDGNLAAATSTGGMTNKLPGRVGDSPLVGAGCYANNASVAVSCTGTGEVFIRALAAYDIAALMDYGGLSLAEACERVVMEKLPALGGSGGLIAIDHEGNVALPFNTEGMYRAWGYAGDTPTTGIYREKGDTVATQ</sequence>
<proteinExistence type="evidence at protein level"/>
<protein>
    <recommendedName>
        <fullName>Isoaspartyl peptidase</fullName>
        <ecNumber>3.4.19.5</ecNumber>
    </recommendedName>
    <alternativeName>
        <fullName>Beta-aspartyl-peptidase</fullName>
    </alternativeName>
    <alternativeName>
        <fullName>EcAIII</fullName>
    </alternativeName>
    <alternativeName>
        <fullName>Isoaspartyl dipeptidase</fullName>
    </alternativeName>
    <component>
        <recommendedName>
            <fullName>Isoaspartyl peptidase subunit alpha</fullName>
        </recommendedName>
    </component>
    <component>
        <recommendedName>
            <fullName>Isoaspartyl peptidase subunit beta</fullName>
        </recommendedName>
    </component>
</protein>
<evidence type="ECO:0000269" key="1">
    <source>
    </source>
</evidence>
<evidence type="ECO:0000269" key="2">
    <source>
    </source>
</evidence>
<evidence type="ECO:0000269" key="3">
    <source>
    </source>
</evidence>
<evidence type="ECO:0000269" key="4">
    <source>
    </source>
</evidence>
<evidence type="ECO:0000269" key="5">
    <source>
    </source>
</evidence>
<evidence type="ECO:0000305" key="6"/>
<evidence type="ECO:0000305" key="7">
    <source>
    </source>
</evidence>
<evidence type="ECO:0007744" key="8">
    <source>
        <dbReference type="PDB" id="2ZAL"/>
    </source>
</evidence>
<evidence type="ECO:0007829" key="9">
    <source>
        <dbReference type="PDB" id="1K2X"/>
    </source>
</evidence>
<evidence type="ECO:0007829" key="10">
    <source>
        <dbReference type="PDB" id="3C17"/>
    </source>
</evidence>
<organism>
    <name type="scientific">Escherichia coli (strain K12)</name>
    <dbReference type="NCBI Taxonomy" id="83333"/>
    <lineage>
        <taxon>Bacteria</taxon>
        <taxon>Pseudomonadati</taxon>
        <taxon>Pseudomonadota</taxon>
        <taxon>Gammaproteobacteria</taxon>
        <taxon>Enterobacterales</taxon>
        <taxon>Enterobacteriaceae</taxon>
        <taxon>Escherichia</taxon>
    </lineage>
</organism>
<dbReference type="EC" id="3.4.19.5"/>
<dbReference type="EMBL" id="U00096">
    <property type="protein sequence ID" value="AAC73915.1"/>
    <property type="molecule type" value="Genomic_DNA"/>
</dbReference>
<dbReference type="EMBL" id="AP009048">
    <property type="protein sequence ID" value="BAA35516.1"/>
    <property type="molecule type" value="Genomic_DNA"/>
</dbReference>
<dbReference type="EMBL" id="M21151">
    <property type="status" value="NOT_ANNOTATED_CDS"/>
    <property type="molecule type" value="Genomic_DNA"/>
</dbReference>
<dbReference type="PIR" id="D64820">
    <property type="entry name" value="D64820"/>
</dbReference>
<dbReference type="RefSeq" id="NP_415349.1">
    <property type="nucleotide sequence ID" value="NC_000913.3"/>
</dbReference>
<dbReference type="RefSeq" id="WP_000513781.1">
    <property type="nucleotide sequence ID" value="NZ_LN832404.1"/>
</dbReference>
<dbReference type="PDB" id="1JN9">
    <property type="method" value="X-ray"/>
    <property type="resolution" value="2.30 A"/>
    <property type="chains" value="A/C=2-178, B/D=179-321"/>
</dbReference>
<dbReference type="PDB" id="1K2X">
    <property type="method" value="X-ray"/>
    <property type="resolution" value="1.65 A"/>
    <property type="chains" value="A/C=2-178, B/D=179-321"/>
</dbReference>
<dbReference type="PDB" id="1T3M">
    <property type="method" value="X-ray"/>
    <property type="resolution" value="1.65 A"/>
    <property type="chains" value="A/C=2-178, B/D=179-321"/>
</dbReference>
<dbReference type="PDB" id="2ZAK">
    <property type="method" value="X-ray"/>
    <property type="resolution" value="2.01 A"/>
    <property type="chains" value="A/B=2-321"/>
</dbReference>
<dbReference type="PDB" id="2ZAL">
    <property type="method" value="X-ray"/>
    <property type="resolution" value="1.90 A"/>
    <property type="chains" value="A/C=2-161, B/D=179-315"/>
</dbReference>
<dbReference type="PDB" id="3C17">
    <property type="method" value="X-ray"/>
    <property type="resolution" value="1.95 A"/>
    <property type="chains" value="A/B=2-321"/>
</dbReference>
<dbReference type="PDB" id="7QVR">
    <property type="method" value="X-ray"/>
    <property type="resolution" value="1.90 A"/>
    <property type="chains" value="AAA/CCC=1-178"/>
</dbReference>
<dbReference type="PDB" id="7QY6">
    <property type="method" value="X-ray"/>
    <property type="resolution" value="1.65 A"/>
    <property type="chains" value="AAA/CCC=1-178"/>
</dbReference>
<dbReference type="PDB" id="7QYM">
    <property type="method" value="X-ray"/>
    <property type="resolution" value="1.20 A"/>
    <property type="chains" value="AAA/CCC=1-178"/>
</dbReference>
<dbReference type="PDB" id="7QYX">
    <property type="method" value="X-ray"/>
    <property type="resolution" value="1.85 A"/>
    <property type="chains" value="AAA/CCC=1-178"/>
</dbReference>
<dbReference type="PDB" id="7R1G">
    <property type="method" value="X-ray"/>
    <property type="resolution" value="1.95 A"/>
    <property type="chains" value="AAA/CCC=1-178"/>
</dbReference>
<dbReference type="PDBsum" id="1JN9"/>
<dbReference type="PDBsum" id="1K2X"/>
<dbReference type="PDBsum" id="1T3M"/>
<dbReference type="PDBsum" id="2ZAK"/>
<dbReference type="PDBsum" id="2ZAL"/>
<dbReference type="PDBsum" id="3C17"/>
<dbReference type="PDBsum" id="7QVR"/>
<dbReference type="PDBsum" id="7QY6"/>
<dbReference type="PDBsum" id="7QYM"/>
<dbReference type="PDBsum" id="7QYX"/>
<dbReference type="PDBsum" id="7R1G"/>
<dbReference type="SMR" id="P37595"/>
<dbReference type="BioGRID" id="4259980">
    <property type="interactions" value="19"/>
</dbReference>
<dbReference type="FunCoup" id="P37595">
    <property type="interactions" value="429"/>
</dbReference>
<dbReference type="IntAct" id="P37595">
    <property type="interactions" value="9"/>
</dbReference>
<dbReference type="STRING" id="511145.b0828"/>
<dbReference type="MEROPS" id="T02.002"/>
<dbReference type="jPOST" id="P37595"/>
<dbReference type="PaxDb" id="511145-b0828"/>
<dbReference type="EnsemblBacteria" id="AAC73915">
    <property type="protein sequence ID" value="AAC73915"/>
    <property type="gene ID" value="b0828"/>
</dbReference>
<dbReference type="GeneID" id="945456"/>
<dbReference type="KEGG" id="ecj:JW0812"/>
<dbReference type="KEGG" id="eco:b0828"/>
<dbReference type="KEGG" id="ecoc:C3026_05195"/>
<dbReference type="PATRIC" id="fig|1411691.4.peg.1450"/>
<dbReference type="EchoBASE" id="EB2307"/>
<dbReference type="eggNOG" id="COG1446">
    <property type="taxonomic scope" value="Bacteria"/>
</dbReference>
<dbReference type="HOGENOM" id="CLU_021603_1_0_6"/>
<dbReference type="InParanoid" id="P37595"/>
<dbReference type="OMA" id="MGIIMVD"/>
<dbReference type="OrthoDB" id="9780217at2"/>
<dbReference type="PhylomeDB" id="P37595"/>
<dbReference type="BioCyc" id="EcoCyc:EG12407-MONOMER"/>
<dbReference type="BioCyc" id="MetaCyc:EG12407-MONOMER"/>
<dbReference type="BRENDA" id="3.4.19.5">
    <property type="organism ID" value="2026"/>
</dbReference>
<dbReference type="BRENDA" id="3.5.1.1">
    <property type="organism ID" value="2026"/>
</dbReference>
<dbReference type="SABIO-RK" id="P37595"/>
<dbReference type="EvolutionaryTrace" id="P37595"/>
<dbReference type="PRO" id="PR:P37595"/>
<dbReference type="Proteomes" id="UP000000625">
    <property type="component" value="Chromosome"/>
</dbReference>
<dbReference type="GO" id="GO:0004067">
    <property type="term" value="F:asparaginase activity"/>
    <property type="evidence" value="ECO:0000314"/>
    <property type="project" value="EcoCyc"/>
</dbReference>
<dbReference type="GO" id="GO:0008798">
    <property type="term" value="F:beta-aspartyl-peptidase activity"/>
    <property type="evidence" value="ECO:0000314"/>
    <property type="project" value="EcoCyc"/>
</dbReference>
<dbReference type="GO" id="GO:0016787">
    <property type="term" value="F:hydrolase activity"/>
    <property type="evidence" value="ECO:0000314"/>
    <property type="project" value="EcoliWiki"/>
</dbReference>
<dbReference type="GO" id="GO:0016540">
    <property type="term" value="P:protein autoprocessing"/>
    <property type="evidence" value="ECO:0000315"/>
    <property type="project" value="EcoCyc"/>
</dbReference>
<dbReference type="CDD" id="cd04701">
    <property type="entry name" value="Asparaginase_2"/>
    <property type="match status" value="1"/>
</dbReference>
<dbReference type="FunFam" id="3.60.20.30:FF:000001">
    <property type="entry name" value="Isoaspartyl peptidase/L-asparaginase"/>
    <property type="match status" value="1"/>
</dbReference>
<dbReference type="Gene3D" id="3.60.20.30">
    <property type="entry name" value="(Glycosyl)asparaginase"/>
    <property type="match status" value="1"/>
</dbReference>
<dbReference type="InterPro" id="IPR029055">
    <property type="entry name" value="Ntn_hydrolases_N"/>
</dbReference>
<dbReference type="InterPro" id="IPR000246">
    <property type="entry name" value="Peptidase_T2"/>
</dbReference>
<dbReference type="NCBIfam" id="NF007589">
    <property type="entry name" value="PRK10226.1"/>
    <property type="match status" value="1"/>
</dbReference>
<dbReference type="PANTHER" id="PTHR10188">
    <property type="entry name" value="L-ASPARAGINASE"/>
    <property type="match status" value="1"/>
</dbReference>
<dbReference type="PANTHER" id="PTHR10188:SF6">
    <property type="entry name" value="N(4)-(BETA-N-ACETYLGLUCOSAMINYL)-L-ASPARAGINASE"/>
    <property type="match status" value="1"/>
</dbReference>
<dbReference type="Pfam" id="PF01112">
    <property type="entry name" value="Asparaginase_2"/>
    <property type="match status" value="1"/>
</dbReference>
<dbReference type="SUPFAM" id="SSF56235">
    <property type="entry name" value="N-terminal nucleophile aminohydrolases (Ntn hydrolases)"/>
    <property type="match status" value="1"/>
</dbReference>
<gene>
    <name type="primary">iaaA</name>
    <name type="synonym">spt</name>
    <name type="synonym">ybiK</name>
    <name type="ordered locus">b0828</name>
    <name type="ordered locus">JW0812</name>
</gene>
<comment type="function">
    <text evidence="2">Degrades proteins damaged by L-isoaspartyl residue formation (also known as beta-Asp residues). Degrades L-isoaspartyl-containing di- and maybe also tripeptides. Also has L-asparaginase activity, although this may not be its principal function.</text>
</comment>
<comment type="function">
    <text evidence="2">May be involved in glutathione, and possibly other peptide, transport, although these results could also be due to polar effects of disruption.</text>
</comment>
<comment type="catalytic activity">
    <reaction>
        <text>Cleavage of a beta-linked Asp residue from the N-terminus of a polypeptide.</text>
        <dbReference type="EC" id="3.4.19.5"/>
    </reaction>
</comment>
<comment type="biophysicochemical properties">
    <kinetics>
        <KM evidence="4">0.138 mM for beta-L-Asp-L-Leu</KM>
        <KM evidence="4">3.9 mM for L-Asn</KM>
        <text>No activity for GlcNAc-Asn, Gly-L-Asn, L-Asp, L-Asn-alpha-amide, L-Gln, aspartylglucosamides alpha- or gamma-aspartyl dipeptides.</text>
    </kinetics>
</comment>
<comment type="subunit">
    <text evidence="1 2 3 5">Heterotetramer of two alpha and two beta chains arranged as a dimer of alpha/beta heterodimers.</text>
</comment>
<comment type="induction">
    <text>Repressed by cysteine, an effect that is attributed to CysB.</text>
</comment>
<comment type="PTM">
    <text>Autocleaved. Generates the alpha and beta subunits. The N-terminal residue of the beta subunit is thought to be responsible for the nucleophile hydrolase activity.</text>
</comment>
<comment type="PTM">
    <text>Both subunits undergo further processing at their C-termini. The overexpressed alpha subunit seems to consist of residues 2-161, with an oxidized Met residue and a tightly coordinated Na(+), whereas the overexpressed beta subunit is processed to residue 315 and has 3 oxidized Met residues. Processing of the alpha subunit is inhibited by Zn(2+).</text>
</comment>
<comment type="mass spectrometry">
    <molecule>Isoaspartyl peptidase subunit alpha</molecule>
    <text>Subunit alpha.</text>
</comment>
<comment type="mass spectrometry">
    <molecule>Isoaspartyl peptidase subunit beta</molecule>
    <text>Subunit beta.</text>
</comment>
<comment type="similarity">
    <text evidence="6">Belongs to the Ntn-hydrolase family.</text>
</comment>
<keyword id="KW-0002">3D-structure</keyword>
<keyword id="KW-0068">Autocatalytic cleavage</keyword>
<keyword id="KW-0903">Direct protein sequencing</keyword>
<keyword id="KW-0378">Hydrolase</keyword>
<keyword id="KW-0645">Protease</keyword>
<keyword id="KW-1185">Reference proteome</keyword>
<accession>P37595</accession>
<accession>P75795</accession>